<proteinExistence type="inferred from homology"/>
<feature type="chain" id="PRO_0000366641" description="Ribosomal RNA large subunit methyltransferase H">
    <location>
        <begin position="1"/>
        <end position="155"/>
    </location>
</feature>
<feature type="binding site" evidence="1">
    <location>
        <position position="73"/>
    </location>
    <ligand>
        <name>S-adenosyl-L-methionine</name>
        <dbReference type="ChEBI" id="CHEBI:59789"/>
    </ligand>
</feature>
<feature type="binding site" evidence="1">
    <location>
        <position position="104"/>
    </location>
    <ligand>
        <name>S-adenosyl-L-methionine</name>
        <dbReference type="ChEBI" id="CHEBI:59789"/>
    </ligand>
</feature>
<feature type="binding site" evidence="1">
    <location>
        <begin position="123"/>
        <end position="128"/>
    </location>
    <ligand>
        <name>S-adenosyl-L-methionine</name>
        <dbReference type="ChEBI" id="CHEBI:59789"/>
    </ligand>
</feature>
<reference key="1">
    <citation type="submission" date="2008-02" db="EMBL/GenBank/DDBJ databases">
        <title>Complete sequence of Pseudomonas putida W619.</title>
        <authorList>
            <person name="Copeland A."/>
            <person name="Lucas S."/>
            <person name="Lapidus A."/>
            <person name="Barry K."/>
            <person name="Detter J.C."/>
            <person name="Glavina del Rio T."/>
            <person name="Dalin E."/>
            <person name="Tice H."/>
            <person name="Pitluck S."/>
            <person name="Chain P."/>
            <person name="Malfatti S."/>
            <person name="Shin M."/>
            <person name="Vergez L."/>
            <person name="Schmutz J."/>
            <person name="Larimer F."/>
            <person name="Land M."/>
            <person name="Hauser L."/>
            <person name="Kyrpides N."/>
            <person name="Kim E."/>
            <person name="Taghavi S."/>
            <person name="Vangronsveld D."/>
            <person name="van der Lelie D."/>
            <person name="Richardson P."/>
        </authorList>
    </citation>
    <scope>NUCLEOTIDE SEQUENCE [LARGE SCALE GENOMIC DNA]</scope>
    <source>
        <strain>W619</strain>
    </source>
</reference>
<keyword id="KW-0963">Cytoplasm</keyword>
<keyword id="KW-0489">Methyltransferase</keyword>
<keyword id="KW-0698">rRNA processing</keyword>
<keyword id="KW-0949">S-adenosyl-L-methionine</keyword>
<keyword id="KW-0808">Transferase</keyword>
<accession>B1J136</accession>
<organism>
    <name type="scientific">Pseudomonas putida (strain W619)</name>
    <dbReference type="NCBI Taxonomy" id="390235"/>
    <lineage>
        <taxon>Bacteria</taxon>
        <taxon>Pseudomonadati</taxon>
        <taxon>Pseudomonadota</taxon>
        <taxon>Gammaproteobacteria</taxon>
        <taxon>Pseudomonadales</taxon>
        <taxon>Pseudomonadaceae</taxon>
        <taxon>Pseudomonas</taxon>
    </lineage>
</organism>
<comment type="function">
    <text evidence="1">Specifically methylates the pseudouridine at position 1915 (m3Psi1915) in 23S rRNA.</text>
</comment>
<comment type="catalytic activity">
    <reaction evidence="1">
        <text>pseudouridine(1915) in 23S rRNA + S-adenosyl-L-methionine = N(3)-methylpseudouridine(1915) in 23S rRNA + S-adenosyl-L-homocysteine + H(+)</text>
        <dbReference type="Rhea" id="RHEA:42752"/>
        <dbReference type="Rhea" id="RHEA-COMP:10221"/>
        <dbReference type="Rhea" id="RHEA-COMP:10222"/>
        <dbReference type="ChEBI" id="CHEBI:15378"/>
        <dbReference type="ChEBI" id="CHEBI:57856"/>
        <dbReference type="ChEBI" id="CHEBI:59789"/>
        <dbReference type="ChEBI" id="CHEBI:65314"/>
        <dbReference type="ChEBI" id="CHEBI:74486"/>
        <dbReference type="EC" id="2.1.1.177"/>
    </reaction>
</comment>
<comment type="subunit">
    <text evidence="1">Homodimer.</text>
</comment>
<comment type="subcellular location">
    <subcellularLocation>
        <location evidence="1">Cytoplasm</location>
    </subcellularLocation>
</comment>
<comment type="similarity">
    <text evidence="1">Belongs to the RNA methyltransferase RlmH family.</text>
</comment>
<protein>
    <recommendedName>
        <fullName evidence="1">Ribosomal RNA large subunit methyltransferase H</fullName>
        <ecNumber evidence="1">2.1.1.177</ecNumber>
    </recommendedName>
    <alternativeName>
        <fullName evidence="1">23S rRNA (pseudouridine1915-N3)-methyltransferase</fullName>
    </alternativeName>
    <alternativeName>
        <fullName evidence="1">23S rRNA m3Psi1915 methyltransferase</fullName>
    </alternativeName>
    <alternativeName>
        <fullName evidence="1">rRNA (pseudouridine-N3-)-methyltransferase RlmH</fullName>
    </alternativeName>
</protein>
<dbReference type="EC" id="2.1.1.177" evidence="1"/>
<dbReference type="EMBL" id="CP000949">
    <property type="protein sequence ID" value="ACA71118.1"/>
    <property type="molecule type" value="Genomic_DNA"/>
</dbReference>
<dbReference type="SMR" id="B1J136"/>
<dbReference type="STRING" id="390235.PputW619_0613"/>
<dbReference type="KEGG" id="ppw:PputW619_0613"/>
<dbReference type="eggNOG" id="COG1576">
    <property type="taxonomic scope" value="Bacteria"/>
</dbReference>
<dbReference type="HOGENOM" id="CLU_100552_1_0_6"/>
<dbReference type="OrthoDB" id="9806643at2"/>
<dbReference type="GO" id="GO:0005737">
    <property type="term" value="C:cytoplasm"/>
    <property type="evidence" value="ECO:0007669"/>
    <property type="project" value="UniProtKB-SubCell"/>
</dbReference>
<dbReference type="GO" id="GO:0070038">
    <property type="term" value="F:rRNA (pseudouridine-N3-)-methyltransferase activity"/>
    <property type="evidence" value="ECO:0007669"/>
    <property type="project" value="UniProtKB-UniRule"/>
</dbReference>
<dbReference type="CDD" id="cd18081">
    <property type="entry name" value="RlmH-like"/>
    <property type="match status" value="1"/>
</dbReference>
<dbReference type="Gene3D" id="3.40.1280.10">
    <property type="match status" value="1"/>
</dbReference>
<dbReference type="HAMAP" id="MF_00658">
    <property type="entry name" value="23SrRNA_methyltr_H"/>
    <property type="match status" value="1"/>
</dbReference>
<dbReference type="InterPro" id="IPR029028">
    <property type="entry name" value="Alpha/beta_knot_MTases"/>
</dbReference>
<dbReference type="InterPro" id="IPR003742">
    <property type="entry name" value="RlmH-like"/>
</dbReference>
<dbReference type="InterPro" id="IPR029026">
    <property type="entry name" value="tRNA_m1G_MTases_N"/>
</dbReference>
<dbReference type="NCBIfam" id="NF000986">
    <property type="entry name" value="PRK00103.1-4"/>
    <property type="match status" value="1"/>
</dbReference>
<dbReference type="NCBIfam" id="TIGR00246">
    <property type="entry name" value="tRNA_RlmH_YbeA"/>
    <property type="match status" value="1"/>
</dbReference>
<dbReference type="PANTHER" id="PTHR33603">
    <property type="entry name" value="METHYLTRANSFERASE"/>
    <property type="match status" value="1"/>
</dbReference>
<dbReference type="PANTHER" id="PTHR33603:SF1">
    <property type="entry name" value="RIBOSOMAL RNA LARGE SUBUNIT METHYLTRANSFERASE H"/>
    <property type="match status" value="1"/>
</dbReference>
<dbReference type="Pfam" id="PF02590">
    <property type="entry name" value="SPOUT_MTase"/>
    <property type="match status" value="1"/>
</dbReference>
<dbReference type="PIRSF" id="PIRSF004505">
    <property type="entry name" value="MT_bac"/>
    <property type="match status" value="1"/>
</dbReference>
<dbReference type="SUPFAM" id="SSF75217">
    <property type="entry name" value="alpha/beta knot"/>
    <property type="match status" value="1"/>
</dbReference>
<sequence length="155" mass="17742">MRLRLIAVGSRMPKWVEEGWHEYAKRLPQELSLELVEIPLNTRGKNADVARLIRQEGEAMLSKVQPGERIVTLEVHGKPWSTEQLATELDRWRLDSRTVNLMVGGPEGLAPEVCARAEQRWSLSPLTLPHPLVRILIGEQIYRAWTVLSGHPYHK</sequence>
<name>RLMH_PSEPW</name>
<evidence type="ECO:0000255" key="1">
    <source>
        <dbReference type="HAMAP-Rule" id="MF_00658"/>
    </source>
</evidence>
<gene>
    <name evidence="1" type="primary">rlmH</name>
    <name type="ordered locus">PputW619_0613</name>
</gene>